<protein>
    <recommendedName>
        <fullName evidence="1">Bifunctional enzyme IspD/IspF</fullName>
    </recommendedName>
    <domain>
        <recommendedName>
            <fullName evidence="1">2-C-methyl-D-erythritol 4-phosphate cytidylyltransferase</fullName>
            <ecNumber evidence="1">2.7.7.60</ecNumber>
        </recommendedName>
        <alternativeName>
            <fullName evidence="1">4-diphosphocytidyl-2C-methyl-D-erythritol synthase</fullName>
        </alternativeName>
        <alternativeName>
            <fullName evidence="1">MEP cytidylyltransferase</fullName>
            <shortName evidence="1">MCT</shortName>
        </alternativeName>
    </domain>
    <domain>
        <recommendedName>
            <fullName evidence="1">2-C-methyl-D-erythritol 2,4-cyclodiphosphate synthase</fullName>
            <shortName evidence="1">MECDP-synthase</shortName>
            <shortName evidence="1">MECPP-synthase</shortName>
            <shortName evidence="1">MECPS</shortName>
            <ecNumber evidence="1">4.6.1.12</ecNumber>
        </recommendedName>
    </domain>
</protein>
<comment type="function">
    <text evidence="1">Bifunctional enzyme that catalyzes the formation of 4-diphosphocytidyl-2-C-methyl-D-erythritol from CTP and 2-C-methyl-D-erythritol 4-phosphate (MEP) (IspD), and catalyzes the conversion of 4-diphosphocytidyl-2-C-methyl-D-erythritol 2-phosphate (CDP-ME2P) to 2-C-methyl-D-erythritol 2,4-cyclodiphosphate (ME-CPP) with a corresponding release of cytidine 5-monophosphate (CMP) (IspF).</text>
</comment>
<comment type="catalytic activity">
    <reaction evidence="1">
        <text>2-C-methyl-D-erythritol 4-phosphate + CTP + H(+) = 4-CDP-2-C-methyl-D-erythritol + diphosphate</text>
        <dbReference type="Rhea" id="RHEA:13429"/>
        <dbReference type="ChEBI" id="CHEBI:15378"/>
        <dbReference type="ChEBI" id="CHEBI:33019"/>
        <dbReference type="ChEBI" id="CHEBI:37563"/>
        <dbReference type="ChEBI" id="CHEBI:57823"/>
        <dbReference type="ChEBI" id="CHEBI:58262"/>
        <dbReference type="EC" id="2.7.7.60"/>
    </reaction>
</comment>
<comment type="catalytic activity">
    <reaction evidence="1">
        <text>4-CDP-2-C-methyl-D-erythritol 2-phosphate = 2-C-methyl-D-erythritol 2,4-cyclic diphosphate + CMP</text>
        <dbReference type="Rhea" id="RHEA:23864"/>
        <dbReference type="ChEBI" id="CHEBI:57919"/>
        <dbReference type="ChEBI" id="CHEBI:58483"/>
        <dbReference type="ChEBI" id="CHEBI:60377"/>
        <dbReference type="EC" id="4.6.1.12"/>
    </reaction>
</comment>
<comment type="cofactor">
    <cofactor evidence="1">
        <name>a divalent metal cation</name>
        <dbReference type="ChEBI" id="CHEBI:60240"/>
    </cofactor>
</comment>
<comment type="pathway">
    <text evidence="1">Isoprenoid biosynthesis; isopentenyl diphosphate biosynthesis via DXP pathway; isopentenyl diphosphate from 1-deoxy-D-xylulose 5-phosphate: step 2/6.</text>
</comment>
<comment type="pathway">
    <text evidence="1">Isoprenoid biosynthesis; isopentenyl diphosphate biosynthesis via DXP pathway; isopentenyl diphosphate from 1-deoxy-D-xylulose 5-phosphate: step 4/6.</text>
</comment>
<comment type="similarity">
    <text evidence="1">In the N-terminal section; belongs to the IspD/TarI cytidylyltransferase family. IspD subfamily.</text>
</comment>
<comment type="similarity">
    <text evidence="1">In the C-terminal section; belongs to the IspF family.</text>
</comment>
<reference key="1">
    <citation type="journal article" date="2009" name="J. Bacteriol.">
        <title>Genome sequences of three Agrobacterium biovars help elucidate the evolution of multichromosome genomes in bacteria.</title>
        <authorList>
            <person name="Slater S.C."/>
            <person name="Goldman B.S."/>
            <person name="Goodner B."/>
            <person name="Setubal J.C."/>
            <person name="Farrand S.K."/>
            <person name="Nester E.W."/>
            <person name="Burr T.J."/>
            <person name="Banta L."/>
            <person name="Dickerman A.W."/>
            <person name="Paulsen I."/>
            <person name="Otten L."/>
            <person name="Suen G."/>
            <person name="Welch R."/>
            <person name="Almeida N.F."/>
            <person name="Arnold F."/>
            <person name="Burton O.T."/>
            <person name="Du Z."/>
            <person name="Ewing A."/>
            <person name="Godsy E."/>
            <person name="Heisel S."/>
            <person name="Houmiel K.L."/>
            <person name="Jhaveri J."/>
            <person name="Lu J."/>
            <person name="Miller N.M."/>
            <person name="Norton S."/>
            <person name="Chen Q."/>
            <person name="Phoolcharoen W."/>
            <person name="Ohlin V."/>
            <person name="Ondrusek D."/>
            <person name="Pride N."/>
            <person name="Stricklin S.L."/>
            <person name="Sun J."/>
            <person name="Wheeler C."/>
            <person name="Wilson L."/>
            <person name="Zhu H."/>
            <person name="Wood D.W."/>
        </authorList>
    </citation>
    <scope>NUCLEOTIDE SEQUENCE [LARGE SCALE GENOMIC DNA]</scope>
    <source>
        <strain>ATCC BAA-846 / DSM 112012 / S4</strain>
    </source>
</reference>
<gene>
    <name evidence="1" type="primary">ispDF</name>
    <name type="ordered locus">Avi_2131</name>
</gene>
<feature type="chain" id="PRO_1000185097" description="Bifunctional enzyme IspD/IspF">
    <location>
        <begin position="1"/>
        <end position="407"/>
    </location>
</feature>
<feature type="region of interest" description="2-C-methyl-D-erythritol 4-phosphate cytidylyltransferase" evidence="1">
    <location>
        <begin position="1"/>
        <end position="247"/>
    </location>
</feature>
<feature type="region of interest" description="2-C-methyl-D-erythritol 2,4-cyclodiphosphate synthase" evidence="1">
    <location>
        <begin position="248"/>
        <end position="407"/>
    </location>
</feature>
<feature type="binding site" evidence="1">
    <location>
        <begin position="254"/>
        <end position="256"/>
    </location>
    <ligand>
        <name>4-CDP-2-C-methyl-D-erythritol 2-phosphate</name>
        <dbReference type="ChEBI" id="CHEBI:57919"/>
    </ligand>
</feature>
<feature type="binding site" evidence="1">
    <location>
        <position position="254"/>
    </location>
    <ligand>
        <name>a divalent metal cation</name>
        <dbReference type="ChEBI" id="CHEBI:60240"/>
    </ligand>
</feature>
<feature type="binding site" evidence="1">
    <location>
        <position position="256"/>
    </location>
    <ligand>
        <name>a divalent metal cation</name>
        <dbReference type="ChEBI" id="CHEBI:60240"/>
    </ligand>
</feature>
<feature type="binding site" evidence="1">
    <location>
        <begin position="280"/>
        <end position="281"/>
    </location>
    <ligand>
        <name>4-CDP-2-C-methyl-D-erythritol 2-phosphate</name>
        <dbReference type="ChEBI" id="CHEBI:57919"/>
    </ligand>
</feature>
<feature type="binding site" evidence="1">
    <location>
        <position position="288"/>
    </location>
    <ligand>
        <name>a divalent metal cation</name>
        <dbReference type="ChEBI" id="CHEBI:60240"/>
    </ligand>
</feature>
<feature type="binding site" evidence="1">
    <location>
        <begin position="302"/>
        <end position="304"/>
    </location>
    <ligand>
        <name>4-CDP-2-C-methyl-D-erythritol 2-phosphate</name>
        <dbReference type="ChEBI" id="CHEBI:57919"/>
    </ligand>
</feature>
<feature type="binding site" evidence="1">
    <location>
        <begin position="378"/>
        <end position="381"/>
    </location>
    <ligand>
        <name>4-CDP-2-C-methyl-D-erythritol 2-phosphate</name>
        <dbReference type="ChEBI" id="CHEBI:57919"/>
    </ligand>
</feature>
<feature type="binding site" evidence="1">
    <location>
        <position position="385"/>
    </location>
    <ligand>
        <name>4-CDP-2-C-methyl-D-erythritol 2-phosphate</name>
        <dbReference type="ChEBI" id="CHEBI:57919"/>
    </ligand>
</feature>
<feature type="binding site" evidence="1">
    <location>
        <position position="388"/>
    </location>
    <ligand>
        <name>4-CDP-2-C-methyl-D-erythritol 2-phosphate</name>
        <dbReference type="ChEBI" id="CHEBI:57919"/>
    </ligand>
</feature>
<feature type="site" description="Transition state stabilizer" evidence="1">
    <location>
        <position position="24"/>
    </location>
</feature>
<feature type="site" description="Transition state stabilizer" evidence="1">
    <location>
        <position position="33"/>
    </location>
</feature>
<feature type="site" description="Positions MEP for the nucleophilic attack" evidence="1">
    <location>
        <position position="168"/>
    </location>
</feature>
<feature type="site" description="Positions MEP for the nucleophilic attack" evidence="1">
    <location>
        <position position="225"/>
    </location>
</feature>
<feature type="site" description="Transition state stabilizer" evidence="1">
    <location>
        <position position="280"/>
    </location>
</feature>
<feature type="site" description="Transition state stabilizer" evidence="1">
    <location>
        <position position="379"/>
    </location>
</feature>
<keyword id="KW-0414">Isoprene biosynthesis</keyword>
<keyword id="KW-0456">Lyase</keyword>
<keyword id="KW-0479">Metal-binding</keyword>
<keyword id="KW-0511">Multifunctional enzyme</keyword>
<keyword id="KW-0548">Nucleotidyltransferase</keyword>
<keyword id="KW-1185">Reference proteome</keyword>
<keyword id="KW-0808">Transferase</keyword>
<sequence length="407" mass="42957">MVHIQADGARSTAVILVAAGRGERAGASSEGPKQYRRIGGKPVIVHSLLGFADLLPQATLIVVIHPDDGALLANALAPYPQLAASLTITHGGKTRQQSVLAGLRALRNQKPDYVLIHDAVRPFFDQLMLQRIIARLDDGADAVLPAIPVTDTLKRGDEGARVVDTVARSGLFAAQTPQSFHFAKILAAHEDAASAGREDFTDDAAIAEWAGLTVHLVEGSPDNVKLTVKRDLEMADARLSHNALPDVRTGNGYDVHQLVPGDGVTLCGIFIAHDQALSGHSDADVALHALTDALLATCGAGDIGDHFPPSDPQWRGAASRIFLEHAANIVRDAGGTIMNADISLIAEAPKIGPHRQIMREKLSEILGIALERCSVKATTNEKIGFVGRGEGIAAIATATVVFQGKPQ</sequence>
<accession>B9JW91</accession>
<name>ISPDF_ALLAM</name>
<evidence type="ECO:0000255" key="1">
    <source>
        <dbReference type="HAMAP-Rule" id="MF_01520"/>
    </source>
</evidence>
<proteinExistence type="inferred from homology"/>
<dbReference type="EC" id="2.7.7.60" evidence="1"/>
<dbReference type="EC" id="4.6.1.12" evidence="1"/>
<dbReference type="EMBL" id="CP000633">
    <property type="protein sequence ID" value="ACM36519.1"/>
    <property type="molecule type" value="Genomic_DNA"/>
</dbReference>
<dbReference type="RefSeq" id="WP_015915940.1">
    <property type="nucleotide sequence ID" value="NC_011989.1"/>
</dbReference>
<dbReference type="SMR" id="B9JW91"/>
<dbReference type="STRING" id="311402.Avi_2131"/>
<dbReference type="KEGG" id="avi:Avi_2131"/>
<dbReference type="eggNOG" id="COG0245">
    <property type="taxonomic scope" value="Bacteria"/>
</dbReference>
<dbReference type="eggNOG" id="COG1211">
    <property type="taxonomic scope" value="Bacteria"/>
</dbReference>
<dbReference type="HOGENOM" id="CLU_042800_1_0_5"/>
<dbReference type="UniPathway" id="UPA00056">
    <property type="reaction ID" value="UER00093"/>
</dbReference>
<dbReference type="UniPathway" id="UPA00056">
    <property type="reaction ID" value="UER00095"/>
</dbReference>
<dbReference type="Proteomes" id="UP000001596">
    <property type="component" value="Chromosome 1"/>
</dbReference>
<dbReference type="GO" id="GO:0008685">
    <property type="term" value="F:2-C-methyl-D-erythritol 2,4-cyclodiphosphate synthase activity"/>
    <property type="evidence" value="ECO:0007669"/>
    <property type="project" value="UniProtKB-UniRule"/>
</dbReference>
<dbReference type="GO" id="GO:0050518">
    <property type="term" value="F:2-C-methyl-D-erythritol 4-phosphate cytidylyltransferase activity"/>
    <property type="evidence" value="ECO:0007669"/>
    <property type="project" value="UniProtKB-UniRule"/>
</dbReference>
<dbReference type="GO" id="GO:0046872">
    <property type="term" value="F:metal ion binding"/>
    <property type="evidence" value="ECO:0007669"/>
    <property type="project" value="UniProtKB-KW"/>
</dbReference>
<dbReference type="GO" id="GO:0019288">
    <property type="term" value="P:isopentenyl diphosphate biosynthetic process, methylerythritol 4-phosphate pathway"/>
    <property type="evidence" value="ECO:0007669"/>
    <property type="project" value="UniProtKB-UniRule"/>
</dbReference>
<dbReference type="GO" id="GO:0016114">
    <property type="term" value="P:terpenoid biosynthetic process"/>
    <property type="evidence" value="ECO:0007669"/>
    <property type="project" value="InterPro"/>
</dbReference>
<dbReference type="CDD" id="cd02516">
    <property type="entry name" value="CDP-ME_synthetase"/>
    <property type="match status" value="1"/>
</dbReference>
<dbReference type="CDD" id="cd00554">
    <property type="entry name" value="MECDP_synthase"/>
    <property type="match status" value="1"/>
</dbReference>
<dbReference type="FunFam" id="3.90.550.10:FF:000003">
    <property type="entry name" value="2-C-methyl-D-erythritol 4-phosphate cytidylyltransferase"/>
    <property type="match status" value="1"/>
</dbReference>
<dbReference type="Gene3D" id="3.30.1330.50">
    <property type="entry name" value="2-C-methyl-D-erythritol 2,4-cyclodiphosphate synthase"/>
    <property type="match status" value="1"/>
</dbReference>
<dbReference type="Gene3D" id="3.90.550.10">
    <property type="entry name" value="Spore Coat Polysaccharide Biosynthesis Protein SpsA, Chain A"/>
    <property type="match status" value="1"/>
</dbReference>
<dbReference type="HAMAP" id="MF_00108">
    <property type="entry name" value="IspD"/>
    <property type="match status" value="1"/>
</dbReference>
<dbReference type="HAMAP" id="MF_01520">
    <property type="entry name" value="IspDF"/>
    <property type="match status" value="1"/>
</dbReference>
<dbReference type="HAMAP" id="MF_00107">
    <property type="entry name" value="IspF"/>
    <property type="match status" value="1"/>
</dbReference>
<dbReference type="InterPro" id="IPR001228">
    <property type="entry name" value="IspD"/>
</dbReference>
<dbReference type="InterPro" id="IPR026596">
    <property type="entry name" value="IspD/F"/>
</dbReference>
<dbReference type="InterPro" id="IPR034683">
    <property type="entry name" value="IspD/TarI"/>
</dbReference>
<dbReference type="InterPro" id="IPR018294">
    <property type="entry name" value="ISPD_synthase_CS"/>
</dbReference>
<dbReference type="InterPro" id="IPR003526">
    <property type="entry name" value="MECDP_synthase"/>
</dbReference>
<dbReference type="InterPro" id="IPR020555">
    <property type="entry name" value="MECDP_synthase_CS"/>
</dbReference>
<dbReference type="InterPro" id="IPR036571">
    <property type="entry name" value="MECDP_synthase_sf"/>
</dbReference>
<dbReference type="InterPro" id="IPR029044">
    <property type="entry name" value="Nucleotide-diphossugar_trans"/>
</dbReference>
<dbReference type="NCBIfam" id="TIGR00453">
    <property type="entry name" value="ispD"/>
    <property type="match status" value="1"/>
</dbReference>
<dbReference type="NCBIfam" id="TIGR00151">
    <property type="entry name" value="ispF"/>
    <property type="match status" value="1"/>
</dbReference>
<dbReference type="NCBIfam" id="NF006899">
    <property type="entry name" value="PRK09382.1"/>
    <property type="match status" value="1"/>
</dbReference>
<dbReference type="PANTHER" id="PTHR43181">
    <property type="entry name" value="2-C-METHYL-D-ERYTHRITOL 2,4-CYCLODIPHOSPHATE SYNTHASE, CHLOROPLASTIC"/>
    <property type="match status" value="1"/>
</dbReference>
<dbReference type="PANTHER" id="PTHR43181:SF1">
    <property type="entry name" value="2-C-METHYL-D-ERYTHRITOL 2,4-CYCLODIPHOSPHATE SYNTHASE, CHLOROPLASTIC"/>
    <property type="match status" value="1"/>
</dbReference>
<dbReference type="Pfam" id="PF01128">
    <property type="entry name" value="IspD"/>
    <property type="match status" value="1"/>
</dbReference>
<dbReference type="Pfam" id="PF02542">
    <property type="entry name" value="YgbB"/>
    <property type="match status" value="1"/>
</dbReference>
<dbReference type="SUPFAM" id="SSF69765">
    <property type="entry name" value="IpsF-like"/>
    <property type="match status" value="1"/>
</dbReference>
<dbReference type="SUPFAM" id="SSF53448">
    <property type="entry name" value="Nucleotide-diphospho-sugar transferases"/>
    <property type="match status" value="1"/>
</dbReference>
<dbReference type="PROSITE" id="PS01295">
    <property type="entry name" value="ISPD"/>
    <property type="match status" value="1"/>
</dbReference>
<dbReference type="PROSITE" id="PS01350">
    <property type="entry name" value="ISPF"/>
    <property type="match status" value="1"/>
</dbReference>
<organism>
    <name type="scientific">Allorhizobium ampelinum (strain ATCC BAA-846 / DSM 112012 / S4)</name>
    <name type="common">Agrobacterium vitis (strain S4)</name>
    <dbReference type="NCBI Taxonomy" id="311402"/>
    <lineage>
        <taxon>Bacteria</taxon>
        <taxon>Pseudomonadati</taxon>
        <taxon>Pseudomonadota</taxon>
        <taxon>Alphaproteobacteria</taxon>
        <taxon>Hyphomicrobiales</taxon>
        <taxon>Rhizobiaceae</taxon>
        <taxon>Rhizobium/Agrobacterium group</taxon>
        <taxon>Allorhizobium</taxon>
        <taxon>Allorhizobium ampelinum</taxon>
    </lineage>
</organism>